<sequence length="1286" mass="140573">MDNDGGAPPPPPTLVVEEPKKAEIRGVAFKELFRFADGLDYVLMGIGSVGAFVHGCSLPLFLRFFADLVNSFGSNSNNVEKMMEEVLKYALYFLVVGAAIWASSWAEISCWMWSGERQTTKMRIKYLEAALNQDIQFFDTEVRTSDVVFAINTDAVMVQDAISEKLGNFIHYMATFVSGFIVGFTAVWQLALVTLAVVPLIAVIGGIHTTTLSKLSNKSQESLSQAGNIVEQTVVQIRVVMAFVGESRASQAYSSALKIAQKLGYKTGLAKGMGLGATYFVVFCCYALLLWYGGYLVRHHLTNGGLAIATMFAVMIGGLALGQSAPSMAAFAKAKVAAAKIFRIIDHKPTIERNSESGVELDSVTGLVELKNVDFSYPSRPDVKILNNFCLSVPAGKTIALVGSSGSGKSTVVSLIERFYDPNSGQVLLDGQDLKTLKLRWLRQQIGLVSQEPALFATSIKENILLGRPDADQVEIEEAARVANAHSFIIKLPDGFDTQVGERGLQLSGGQKQRIAIARAMLKNPAILLLDEATSALDSESEKLVQEALDRFMIGRTTLIIAHRLSTIRKADLVAVLQQGSVSEIGTHDELFSKGENGVYAKLIKMQEAAHETAMSNARKSSARPSSARNSVSSPIMTRNSSYGRSPYSRRLSDFSTSDFSLSIDASSYPNYRNEKLAFKDQANSFWRLAKMNSPEWKYALLGSVGSVICGSLSAFFAYVLSAVLSVYYNPDHEYMIKQIDKYCYLLIGLSSAALVFNTLQHSFWDIVGENLTKRVREKMLSAVLKNEMAWFDQEENESARIAARLALDANNVRSAIGDRISVIVQNTALMLVACTAGFVLQWRLALVLVAVFPVVVAATVLQKMFMTGFSGDLEAAHAKGTQLAGEAIANVRTVAAFNSEAKIVRLYTANLEPPLKRCFWKGQIAGSGYGVAQFCLYASYALGLWYASWLVKHGISDFSKTIRVFMVLMVSANGAAETLTLAPDFIKGGQAMRSVFELLDRKTEIEPDDPDTTPVPDRLRGEVELKHIDFSYPSRPDIQIFRDLSLRARAGKTLALVGPSGCGKSSVISLIQRFYEPSSGRVMIDGKDIRKYNLKAIRKHIAIVPQEPCLFGTTIYENIAYGHECATEAEIIQAATLASAHKFISALPEGYKTYVGERGVQLSGGQKQRIAIARALVRKAEIMLLDEATSALDAESERSVQEALDQACSGRTSIVVAHRLSTIRNAHVIAVIDDGKVAEQGSHSHLLKNHPDGIYARMIQLQRFTHTQVIGMTSGSSSRVKEDDA</sequence>
<dbReference type="EMBL" id="X61370">
    <property type="protein sequence ID" value="CAA43646.1"/>
    <property type="molecule type" value="Genomic_DNA"/>
</dbReference>
<dbReference type="EMBL" id="AC006922">
    <property type="protein sequence ID" value="AAD31576.1"/>
    <property type="molecule type" value="Genomic_DNA"/>
</dbReference>
<dbReference type="EMBL" id="CP002685">
    <property type="protein sequence ID" value="AEC09320.1"/>
    <property type="molecule type" value="Genomic_DNA"/>
</dbReference>
<dbReference type="EMBL" id="AY140105">
    <property type="protein sequence ID" value="AAM98246.1"/>
    <property type="molecule type" value="mRNA"/>
</dbReference>
<dbReference type="PIR" id="A42150">
    <property type="entry name" value="A42150"/>
</dbReference>
<dbReference type="RefSeq" id="NP_181228.1">
    <property type="nucleotide sequence ID" value="NM_129247.3"/>
</dbReference>
<dbReference type="PDB" id="8ZPX">
    <property type="method" value="EM"/>
    <property type="resolution" value="3.50 A"/>
    <property type="chains" value="B=1-1286"/>
</dbReference>
<dbReference type="PDB" id="8ZPZ">
    <property type="method" value="EM"/>
    <property type="resolution" value="3.50 A"/>
    <property type="chains" value="B=1-1286"/>
</dbReference>
<dbReference type="PDB" id="8ZQ4">
    <property type="method" value="EM"/>
    <property type="resolution" value="3.80 A"/>
    <property type="chains" value="B=1-1286"/>
</dbReference>
<dbReference type="PDB" id="9JUJ">
    <property type="method" value="EM"/>
    <property type="resolution" value="3.40 A"/>
    <property type="chains" value="A=1-1286"/>
</dbReference>
<dbReference type="PDB" id="9JUK">
    <property type="method" value="EM"/>
    <property type="resolution" value="3.30 A"/>
    <property type="chains" value="A=1-1286"/>
</dbReference>
<dbReference type="PDB" id="9JUL">
    <property type="method" value="EM"/>
    <property type="resolution" value="3.10 A"/>
    <property type="chains" value="A=1-1286"/>
</dbReference>
<dbReference type="PDB" id="9JUM">
    <property type="method" value="EM"/>
    <property type="resolution" value="3.10 A"/>
    <property type="chains" value="A=1-1286"/>
</dbReference>
<dbReference type="PDB" id="9JUN">
    <property type="method" value="EM"/>
    <property type="resolution" value="3.40 A"/>
    <property type="chains" value="A=1-1286"/>
</dbReference>
<dbReference type="PDB" id="9JUO">
    <property type="method" value="EM"/>
    <property type="resolution" value="3.10 A"/>
    <property type="chains" value="A=1-1286"/>
</dbReference>
<dbReference type="PDB" id="9JUP">
    <property type="method" value="EM"/>
    <property type="resolution" value="3.10 A"/>
    <property type="chains" value="A=1-1286"/>
</dbReference>
<dbReference type="PDBsum" id="8ZPX"/>
<dbReference type="PDBsum" id="8ZPZ"/>
<dbReference type="PDBsum" id="8ZQ4"/>
<dbReference type="PDBsum" id="9JUJ"/>
<dbReference type="PDBsum" id="9JUK"/>
<dbReference type="PDBsum" id="9JUL"/>
<dbReference type="PDBsum" id="9JUM"/>
<dbReference type="PDBsum" id="9JUN"/>
<dbReference type="PDBsum" id="9JUO"/>
<dbReference type="PDBsum" id="9JUP"/>
<dbReference type="EMDB" id="EMD-60366"/>
<dbReference type="EMDB" id="EMD-60369"/>
<dbReference type="EMDB" id="EMD-60370"/>
<dbReference type="EMDB" id="EMD-61827"/>
<dbReference type="EMDB" id="EMD-61828"/>
<dbReference type="EMDB" id="EMD-61829"/>
<dbReference type="EMDB" id="EMD-61830"/>
<dbReference type="EMDB" id="EMD-61831"/>
<dbReference type="EMDB" id="EMD-61832"/>
<dbReference type="EMDB" id="EMD-61833"/>
<dbReference type="SMR" id="Q9ZR72"/>
<dbReference type="BioGRID" id="3609">
    <property type="interactions" value="11"/>
</dbReference>
<dbReference type="FunCoup" id="Q9ZR72">
    <property type="interactions" value="952"/>
</dbReference>
<dbReference type="IntAct" id="Q9ZR72">
    <property type="interactions" value="8"/>
</dbReference>
<dbReference type="STRING" id="3702.Q9ZR72"/>
<dbReference type="TCDB" id="3.A.1.201.5">
    <property type="family name" value="the atp-binding cassette (abc) superfamily"/>
</dbReference>
<dbReference type="GlyCosmos" id="Q9ZR72">
    <property type="glycosylation" value="4 sites, No reported glycans"/>
</dbReference>
<dbReference type="GlyGen" id="Q9ZR72">
    <property type="glycosylation" value="4 sites"/>
</dbReference>
<dbReference type="iPTMnet" id="Q9ZR72"/>
<dbReference type="PaxDb" id="3702-AT2G36910.1"/>
<dbReference type="ProteomicsDB" id="244510"/>
<dbReference type="EnsemblPlants" id="AT2G36910.1">
    <property type="protein sequence ID" value="AT2G36910.1"/>
    <property type="gene ID" value="AT2G36910"/>
</dbReference>
<dbReference type="GeneID" id="818265"/>
<dbReference type="Gramene" id="AT2G36910.1">
    <property type="protein sequence ID" value="AT2G36910.1"/>
    <property type="gene ID" value="AT2G36910"/>
</dbReference>
<dbReference type="KEGG" id="ath:AT2G36910"/>
<dbReference type="Araport" id="AT2G36910"/>
<dbReference type="TAIR" id="AT2G36910">
    <property type="gene designation" value="ABCB1"/>
</dbReference>
<dbReference type="eggNOG" id="KOG0055">
    <property type="taxonomic scope" value="Eukaryota"/>
</dbReference>
<dbReference type="HOGENOM" id="CLU_000604_17_2_1"/>
<dbReference type="InParanoid" id="Q9ZR72"/>
<dbReference type="OMA" id="YEMCLGQ"/>
<dbReference type="PhylomeDB" id="Q9ZR72"/>
<dbReference type="BioCyc" id="ARA:AT2G36910-MONOMER"/>
<dbReference type="CD-CODE" id="4299E36E">
    <property type="entry name" value="Nucleolus"/>
</dbReference>
<dbReference type="PRO" id="PR:Q9ZR72"/>
<dbReference type="Proteomes" id="UP000006548">
    <property type="component" value="Chromosome 2"/>
</dbReference>
<dbReference type="ExpressionAtlas" id="Q9ZR72">
    <property type="expression patterns" value="baseline and differential"/>
</dbReference>
<dbReference type="GO" id="GO:0005783">
    <property type="term" value="C:endoplasmic reticulum"/>
    <property type="evidence" value="ECO:0007005"/>
    <property type="project" value="TAIR"/>
</dbReference>
<dbReference type="GO" id="GO:0005886">
    <property type="term" value="C:plasma membrane"/>
    <property type="evidence" value="ECO:0000314"/>
    <property type="project" value="TAIR"/>
</dbReference>
<dbReference type="GO" id="GO:0009506">
    <property type="term" value="C:plasmodesma"/>
    <property type="evidence" value="ECO:0007005"/>
    <property type="project" value="TAIR"/>
</dbReference>
<dbReference type="GO" id="GO:0140359">
    <property type="term" value="F:ABC-type transporter activity"/>
    <property type="evidence" value="ECO:0000250"/>
    <property type="project" value="UniProtKB"/>
</dbReference>
<dbReference type="GO" id="GO:0005524">
    <property type="term" value="F:ATP binding"/>
    <property type="evidence" value="ECO:0007669"/>
    <property type="project" value="UniProtKB-KW"/>
</dbReference>
<dbReference type="GO" id="GO:0016887">
    <property type="term" value="F:ATP hydrolysis activity"/>
    <property type="evidence" value="ECO:0000250"/>
    <property type="project" value="UniProtKB"/>
</dbReference>
<dbReference type="GO" id="GO:0042626">
    <property type="term" value="F:ATPase-coupled transmembrane transporter activity"/>
    <property type="evidence" value="ECO:0000250"/>
    <property type="project" value="TAIR"/>
</dbReference>
<dbReference type="GO" id="GO:0010329">
    <property type="term" value="F:auxin efflux transmembrane transporter activity"/>
    <property type="evidence" value="ECO:0000314"/>
    <property type="project" value="TAIR"/>
</dbReference>
<dbReference type="GO" id="GO:0010328">
    <property type="term" value="F:auxin influx transmembrane transporter activity"/>
    <property type="evidence" value="ECO:0000314"/>
    <property type="project" value="TAIR"/>
</dbReference>
<dbReference type="GO" id="GO:0043481">
    <property type="term" value="P:anthocyanin accumulation in tissues in response to UV light"/>
    <property type="evidence" value="ECO:0000315"/>
    <property type="project" value="TAIR"/>
</dbReference>
<dbReference type="GO" id="GO:0010315">
    <property type="term" value="P:auxin export across the plasma membrane"/>
    <property type="evidence" value="ECO:0000314"/>
    <property type="project" value="TAIR"/>
</dbReference>
<dbReference type="GO" id="GO:0009926">
    <property type="term" value="P:auxin polar transport"/>
    <property type="evidence" value="ECO:0000315"/>
    <property type="project" value="TAIR"/>
</dbReference>
<dbReference type="GO" id="GO:0009734">
    <property type="term" value="P:auxin-activated signaling pathway"/>
    <property type="evidence" value="ECO:0007669"/>
    <property type="project" value="UniProtKB-KW"/>
</dbReference>
<dbReference type="GO" id="GO:0009640">
    <property type="term" value="P:photomorphogenesis"/>
    <property type="evidence" value="ECO:0000315"/>
    <property type="project" value="TAIR"/>
</dbReference>
<dbReference type="GO" id="GO:0009958">
    <property type="term" value="P:positive gravitropism"/>
    <property type="evidence" value="ECO:0000316"/>
    <property type="project" value="TAIR"/>
</dbReference>
<dbReference type="GO" id="GO:1900459">
    <property type="term" value="P:positive regulation of brassinosteroid mediated signaling pathway"/>
    <property type="evidence" value="ECO:0000315"/>
    <property type="project" value="UniProtKB"/>
</dbReference>
<dbReference type="GO" id="GO:0008361">
    <property type="term" value="P:regulation of cell size"/>
    <property type="evidence" value="ECO:0000315"/>
    <property type="project" value="TAIR"/>
</dbReference>
<dbReference type="GO" id="GO:0009733">
    <property type="term" value="P:response to auxin"/>
    <property type="evidence" value="ECO:0000315"/>
    <property type="project" value="TAIR"/>
</dbReference>
<dbReference type="GO" id="GO:0009637">
    <property type="term" value="P:response to blue light"/>
    <property type="evidence" value="ECO:0000315"/>
    <property type="project" value="TAIR"/>
</dbReference>
<dbReference type="GO" id="GO:0009741">
    <property type="term" value="P:response to brassinosteroid"/>
    <property type="evidence" value="ECO:0000315"/>
    <property type="project" value="UniProtKB"/>
</dbReference>
<dbReference type="GO" id="GO:0009624">
    <property type="term" value="P:response to nematode"/>
    <property type="evidence" value="ECO:0007007"/>
    <property type="project" value="TAIR"/>
</dbReference>
<dbReference type="GO" id="GO:0009639">
    <property type="term" value="P:response to red or far red light"/>
    <property type="evidence" value="ECO:0000315"/>
    <property type="project" value="TAIR"/>
</dbReference>
<dbReference type="GO" id="GO:0048443">
    <property type="term" value="P:stamen development"/>
    <property type="evidence" value="ECO:0000316"/>
    <property type="project" value="TAIR"/>
</dbReference>
<dbReference type="CDD" id="cd18577">
    <property type="entry name" value="ABC_6TM_Pgp_ABCB1_D1_like"/>
    <property type="match status" value="1"/>
</dbReference>
<dbReference type="CDD" id="cd18578">
    <property type="entry name" value="ABC_6TM_Pgp_ABCB1_D2_like"/>
    <property type="match status" value="1"/>
</dbReference>
<dbReference type="CDD" id="cd03249">
    <property type="entry name" value="ABC_MTABC3_MDL1_MDL2"/>
    <property type="match status" value="2"/>
</dbReference>
<dbReference type="FunFam" id="1.20.1560.10:FF:000009">
    <property type="entry name" value="ABC transporter B family member 1"/>
    <property type="match status" value="1"/>
</dbReference>
<dbReference type="FunFam" id="1.20.1560.10:FF:000029">
    <property type="entry name" value="ABC transporter B family member 1"/>
    <property type="match status" value="1"/>
</dbReference>
<dbReference type="FunFam" id="3.40.50.300:FF:000066">
    <property type="entry name" value="ABC transporter B family member 1"/>
    <property type="match status" value="2"/>
</dbReference>
<dbReference type="FunFam" id="1.20.1560.10:FF:000033">
    <property type="entry name" value="ABC transporter B family member 19"/>
    <property type="match status" value="1"/>
</dbReference>
<dbReference type="Gene3D" id="1.20.1560.10">
    <property type="entry name" value="ABC transporter type 1, transmembrane domain"/>
    <property type="match status" value="3"/>
</dbReference>
<dbReference type="Gene3D" id="3.40.50.300">
    <property type="entry name" value="P-loop containing nucleotide triphosphate hydrolases"/>
    <property type="match status" value="2"/>
</dbReference>
<dbReference type="InterPro" id="IPR003593">
    <property type="entry name" value="AAA+_ATPase"/>
</dbReference>
<dbReference type="InterPro" id="IPR011527">
    <property type="entry name" value="ABC1_TM_dom"/>
</dbReference>
<dbReference type="InterPro" id="IPR036640">
    <property type="entry name" value="ABC1_TM_sf"/>
</dbReference>
<dbReference type="InterPro" id="IPR003439">
    <property type="entry name" value="ABC_transporter-like_ATP-bd"/>
</dbReference>
<dbReference type="InterPro" id="IPR017871">
    <property type="entry name" value="ABC_transporter-like_CS"/>
</dbReference>
<dbReference type="InterPro" id="IPR027417">
    <property type="entry name" value="P-loop_NTPase"/>
</dbReference>
<dbReference type="InterPro" id="IPR039421">
    <property type="entry name" value="Type_1_exporter"/>
</dbReference>
<dbReference type="PANTHER" id="PTHR43394:SF11">
    <property type="entry name" value="ATP-BINDING CASSETTE TRANSPORTER"/>
    <property type="match status" value="1"/>
</dbReference>
<dbReference type="PANTHER" id="PTHR43394">
    <property type="entry name" value="ATP-DEPENDENT PERMEASE MDL1, MITOCHONDRIAL"/>
    <property type="match status" value="1"/>
</dbReference>
<dbReference type="Pfam" id="PF00664">
    <property type="entry name" value="ABC_membrane"/>
    <property type="match status" value="2"/>
</dbReference>
<dbReference type="Pfam" id="PF00005">
    <property type="entry name" value="ABC_tran"/>
    <property type="match status" value="2"/>
</dbReference>
<dbReference type="SMART" id="SM00382">
    <property type="entry name" value="AAA"/>
    <property type="match status" value="2"/>
</dbReference>
<dbReference type="SUPFAM" id="SSF90123">
    <property type="entry name" value="ABC transporter transmembrane region"/>
    <property type="match status" value="2"/>
</dbReference>
<dbReference type="SUPFAM" id="SSF52540">
    <property type="entry name" value="P-loop containing nucleoside triphosphate hydrolases"/>
    <property type="match status" value="2"/>
</dbReference>
<dbReference type="PROSITE" id="PS50929">
    <property type="entry name" value="ABC_TM1F"/>
    <property type="match status" value="2"/>
</dbReference>
<dbReference type="PROSITE" id="PS00211">
    <property type="entry name" value="ABC_TRANSPORTER_1"/>
    <property type="match status" value="2"/>
</dbReference>
<dbReference type="PROSITE" id="PS50893">
    <property type="entry name" value="ABC_TRANSPORTER_2"/>
    <property type="match status" value="2"/>
</dbReference>
<comment type="function">
    <text evidence="7 8 9 11 12 13 14 15 16 17 18 19">Brassinosteroid exporter that, in conjunction with ABCB19, supports the accumulation of exogenous brassinosteroids (BR) in the apoplast, thus promoting BR signaling initiation involving the specific receptor BRI1 and required for plant growth and stress responses (PubMed:38513023, PubMed:39497419). Auxin efflux transporter that acts as a negative regulator of light signaling to promote hypocotyl elongation (PubMed:32855213, PubMed:39497419). May contribute to the regulation of leaf position and morphology during PHOT1-mediated blue light responses involving auxin distribution, especially in low light fluence (PubMed:32855213, PubMed:35528937). Together with ABCB19 and in a FKBP42/TWD1-dependent manner, supports seed development by promoting stamen elongation and, to a lesser extent, anther dehiscence and pollen maturation, probably as auxin transporters (PubMed:35512423, PubMed:35528937). Mediates the accumulation of chlorophyll and anthocyanin, as well as the expression of genes in response to light. Participates directly in auxin efflux and thus regulates the polar (presumably basipetal) auxin transport (from root tips to root elongating zone). Also transports some auxin metabolites such as oxindoleacetic acid and indoleacetaldehyde. Involved in diverse auxin-mediated responses including gravitropism, phototropism and lateral root formation. Confers resistance to herbicides such as dicamba, pendimethalin, oryzalin, and monosodium acid methanearsonate (MSMA), but not to herbicides such as glyphosate, atrazine, bentazon and fluazifop-p-butyl. Also mediates resistance to xenobiotics such as cycloheximide and the cytokinin N6-(2-isopentenyl)adenine (2IP).</text>
</comment>
<comment type="catalytic activity">
    <reaction evidence="14">
        <text>(indol-3-yl)acetate(in) + ATP + H2O = (indol-3-yl)acetate(out) + ADP + phosphate + H(+)</text>
        <dbReference type="Rhea" id="RHEA:84235"/>
        <dbReference type="ChEBI" id="CHEBI:15377"/>
        <dbReference type="ChEBI" id="CHEBI:15378"/>
        <dbReference type="ChEBI" id="CHEBI:30616"/>
        <dbReference type="ChEBI" id="CHEBI:30854"/>
        <dbReference type="ChEBI" id="CHEBI:43474"/>
        <dbReference type="ChEBI" id="CHEBI:456216"/>
    </reaction>
    <physiologicalReaction direction="left-to-right" evidence="14">
        <dbReference type="Rhea" id="RHEA:84236"/>
    </physiologicalReaction>
</comment>
<comment type="catalytic activity">
    <reaction evidence="18">
        <text>brassinolide(in) + ATP + H2O = brassinolide(out) + ADP + phosphate + H(+)</text>
        <dbReference type="Rhea" id="RHEA:84239"/>
        <dbReference type="ChEBI" id="CHEBI:15377"/>
        <dbReference type="ChEBI" id="CHEBI:15378"/>
        <dbReference type="ChEBI" id="CHEBI:28277"/>
        <dbReference type="ChEBI" id="CHEBI:30616"/>
        <dbReference type="ChEBI" id="CHEBI:43474"/>
        <dbReference type="ChEBI" id="CHEBI:456216"/>
    </reaction>
    <physiologicalReaction direction="left-to-right" evidence="18">
        <dbReference type="Rhea" id="RHEA:84240"/>
    </physiologicalReaction>
</comment>
<comment type="catalytic activity">
    <reaction evidence="18">
        <text>24-epi-brassinolide(in) + ATP + H2O = 24-epi-brassinolide(out) + ADP + phosphate + H(+)</text>
        <dbReference type="Rhea" id="RHEA:84263"/>
        <dbReference type="ChEBI" id="CHEBI:15377"/>
        <dbReference type="ChEBI" id="CHEBI:15378"/>
        <dbReference type="ChEBI" id="CHEBI:27722"/>
        <dbReference type="ChEBI" id="CHEBI:30616"/>
        <dbReference type="ChEBI" id="CHEBI:43474"/>
        <dbReference type="ChEBI" id="CHEBI:456216"/>
    </reaction>
    <physiologicalReaction direction="left-to-right" evidence="18">
        <dbReference type="Rhea" id="RHEA:84264"/>
    </physiologicalReaction>
</comment>
<comment type="catalytic activity">
    <reaction evidence="18">
        <text>24-epi-castasterone(in) + ATP + H2O = 24-epi-castasterone(out) + ADP + phosphate + H(+)</text>
        <dbReference type="Rhea" id="RHEA:84267"/>
        <dbReference type="ChEBI" id="CHEBI:15377"/>
        <dbReference type="ChEBI" id="CHEBI:15378"/>
        <dbReference type="ChEBI" id="CHEBI:30616"/>
        <dbReference type="ChEBI" id="CHEBI:43474"/>
        <dbReference type="ChEBI" id="CHEBI:233658"/>
        <dbReference type="ChEBI" id="CHEBI:456216"/>
    </reaction>
    <physiologicalReaction direction="left-to-right" evidence="18">
        <dbReference type="Rhea" id="RHEA:84268"/>
    </physiologicalReaction>
</comment>
<comment type="catalytic activity">
    <reaction evidence="18">
        <text>castasterone(in) + ATP + H2O = castasterone(out) + ADP + phosphate + H(+)</text>
        <dbReference type="Rhea" id="RHEA:84271"/>
        <dbReference type="ChEBI" id="CHEBI:15377"/>
        <dbReference type="ChEBI" id="CHEBI:15378"/>
        <dbReference type="ChEBI" id="CHEBI:23051"/>
        <dbReference type="ChEBI" id="CHEBI:30616"/>
        <dbReference type="ChEBI" id="CHEBI:43474"/>
        <dbReference type="ChEBI" id="CHEBI:456216"/>
    </reaction>
    <physiologicalReaction direction="left-to-right" evidence="18">
        <dbReference type="Rhea" id="RHEA:84272"/>
    </physiologicalReaction>
</comment>
<comment type="activity regulation">
    <text evidence="15 18">Transport capacity is stimulated by the chaperone protein FKBP42/TWD1 (PubMed:35512423). Transport activity inhibited by 1-N-naphthylphthalamic acid (NPA), cyclopropyl propane dione (CPD), cyclosporin A, verapamil and quercetin. ATPase activity is specifically activated by bioactive brassinosteroids in a dose-dependent manner, including brassinolide (BL), 24-epiBL, 24-epicastasterone (24-epiCS) and castasterone-alkyne; BL binding leads to structural changes (PubMed:39497419). Inhibited by vanadate (PubMed:39497419).</text>
</comment>
<comment type="biophysicochemical properties">
    <kinetics>
        <Vmax evidence="18">281.7 nmol/min/mg enzyme with ATP as substrate (in the presence of brassinolide)</Vmax>
        <Vmax evidence="18">230.3 nmol/min/mg enzyme with ATP as substrate (in the presence of 24-epibrassinolide)</Vmax>
        <Vmax evidence="18">219.6 nmol/min/mg enzyme with ATP as substrate (in the presence of 24-epicastasterone)</Vmax>
        <Vmax evidence="18">174.0 nmol/min/mg enzyme with ATP as substrate (in the presence of castasterone-alkyne)</Vmax>
    </kinetics>
</comment>
<comment type="subunit">
    <text evidence="8 11">Interacts with 1-naphthylphthalamic acid (NPA) and FKBP42/TWD1.</text>
</comment>
<comment type="interaction">
    <interactant intactId="EBI-366396">
        <id>Q9ZR72</id>
    </interactant>
    <interactant intactId="EBI-360006">
        <id>Q9LDC0</id>
        <label>FKBP42</label>
    </interactant>
    <organismsDiffer>false</organismsDiffer>
    <experiments>2</experiments>
</comment>
<comment type="subcellular location">
    <subcellularLocation>
        <location evidence="11 13 15 19">Cell membrane</location>
        <topology evidence="1 11 13 19">Multi-pass membrane protein</topology>
    </subcellularLocation>
    <text evidence="11 13 15 19">Non-polar distribution in apical cells. Predominant basal (top) localization in root tissues above the elongation zone, especially in mature cortical and endodermal cells. Basal and apical localization in the root elongation zone (PubMed:14517332, PubMed:16212599, PubMed:9761790). Localized on the endothecium and middle layer cells plasma membrane (PubMed:35512423).</text>
</comment>
<comment type="tissue specificity">
    <text evidence="10 13 16 19">Ubiquitous, with high levels in peduncles. Mostly localized in young developing tissues, including meristems, as well as root and shoot apices (PubMed:35528937).</text>
</comment>
<comment type="developmental stage">
    <text evidence="15">During stamen development, first detected in the middle layer of the anther, later at the basal region of the filament, and finally throughout the mature filament (at protein level) (PubMed:35512423). In flowers, highly expressed at the base of petals and sepals, as well as at their receptacle junctions (at protein level) (PubMed:35512423).</text>
</comment>
<comment type="induction">
    <text evidence="13 17">By auxin (PubMed:16212599). Induced by brassinosteroids (at protein level) (PubMed:38513023).</text>
</comment>
<comment type="disruption phenotype">
    <text evidence="14 15 16 17 18">Reduced brassinosteroid export (PubMed:39497419). Lower petiole angles under red plus far-red light (PubMed:32855213). The abcb1 abcb19 double mutant is severely dwarfed, with excessive leaf and petiole curling, reduced internode lengths, increased stem and silique waving and skewing, and exhibits poor flower fertility due to short stamen filaments not sufficiently elongated to position the anthers above the stigma during anthesis; this phenotype is associated with lower free auxin levels in blue light and reduced length of epidermal cells in the middle of stamen (PubMed:32855213, PubMed:35512423, PubMed:35528937). The double mutant abcb1 abcb19 is also deficient in brassinosteroid export and is insensitive to brassinolide and its biosynthetic precursor 22-hydroxycampesterol, resulting in decreased brassinosteroid signaling; this phenotype is restored by bikinin (BIK) treatment, which can activate brassinosteroid signaling downstream of the BRI1 receptor (PubMed:38513023, PubMed:39497419).</text>
</comment>
<comment type="similarity">
    <text evidence="5">Belongs to the ABC transporter superfamily. ABCB family. Multidrug resistance exporter (TC 3.A.1.201) subfamily.</text>
</comment>
<accession>Q9ZR72</accession>
<accession>Q8L6X6</accession>
<name>AB1B_ARATH</name>
<evidence type="ECO:0000255" key="1"/>
<evidence type="ECO:0000255" key="2">
    <source>
        <dbReference type="PROSITE-ProRule" id="PRU00434"/>
    </source>
</evidence>
<evidence type="ECO:0000255" key="3">
    <source>
        <dbReference type="PROSITE-ProRule" id="PRU00441"/>
    </source>
</evidence>
<evidence type="ECO:0000255" key="4">
    <source>
        <dbReference type="PROSITE-ProRule" id="PRU00498"/>
    </source>
</evidence>
<evidence type="ECO:0000255" key="5">
    <source>
        <dbReference type="PROSITE-ProRule" id="PRU01700"/>
    </source>
</evidence>
<evidence type="ECO:0000256" key="6">
    <source>
        <dbReference type="SAM" id="MobiDB-lite"/>
    </source>
</evidence>
<evidence type="ECO:0000269" key="7">
    <source>
    </source>
</evidence>
<evidence type="ECO:0000269" key="8">
    <source>
    </source>
</evidence>
<evidence type="ECO:0000269" key="9">
    <source>
    </source>
</evidence>
<evidence type="ECO:0000269" key="10">
    <source>
    </source>
</evidence>
<evidence type="ECO:0000269" key="11">
    <source>
    </source>
</evidence>
<evidence type="ECO:0000269" key="12">
    <source>
    </source>
</evidence>
<evidence type="ECO:0000269" key="13">
    <source>
    </source>
</evidence>
<evidence type="ECO:0000269" key="14">
    <source>
    </source>
</evidence>
<evidence type="ECO:0000269" key="15">
    <source>
    </source>
</evidence>
<evidence type="ECO:0000269" key="16">
    <source>
    </source>
</evidence>
<evidence type="ECO:0000269" key="17">
    <source>
    </source>
</evidence>
<evidence type="ECO:0000269" key="18">
    <source>
    </source>
</evidence>
<evidence type="ECO:0000269" key="19">
    <source>
    </source>
</evidence>
<evidence type="ECO:0000269" key="20">
    <source ref="20"/>
</evidence>
<evidence type="ECO:0000303" key="21">
    <source>
    </source>
</evidence>
<evidence type="ECO:0000303" key="22">
    <source>
    </source>
</evidence>
<evidence type="ECO:0000303" key="23">
    <source>
    </source>
</evidence>
<evidence type="ECO:0000303" key="24">
    <source>
    </source>
</evidence>
<evidence type="ECO:0000305" key="25"/>
<evidence type="ECO:0000305" key="26">
    <source>
    </source>
</evidence>
<evidence type="ECO:0000305" key="27">
    <source>
    </source>
</evidence>
<evidence type="ECO:0000305" key="28">
    <source ref="20"/>
</evidence>
<evidence type="ECO:0000312" key="29">
    <source>
        <dbReference type="Araport" id="AT2G36910"/>
    </source>
</evidence>
<evidence type="ECO:0000312" key="30">
    <source>
        <dbReference type="EMBL" id="AAD31576.1"/>
    </source>
</evidence>
<evidence type="ECO:0007744" key="31">
    <source>
        <dbReference type="PDB" id="8ZPX"/>
    </source>
</evidence>
<evidence type="ECO:0007744" key="32">
    <source>
        <dbReference type="PDB" id="8ZPZ"/>
    </source>
</evidence>
<evidence type="ECO:0007744" key="33">
    <source>
        <dbReference type="PDB" id="8ZQ4"/>
    </source>
</evidence>
<evidence type="ECO:0007744" key="34">
    <source>
        <dbReference type="PDB" id="9JUJ"/>
    </source>
</evidence>
<evidence type="ECO:0007744" key="35">
    <source>
        <dbReference type="PDB" id="9JUK"/>
    </source>
</evidence>
<evidence type="ECO:0007744" key="36">
    <source>
        <dbReference type="PDB" id="9JUL"/>
    </source>
</evidence>
<evidence type="ECO:0007744" key="37">
    <source>
        <dbReference type="PDB" id="9JUM"/>
    </source>
</evidence>
<evidence type="ECO:0007744" key="38">
    <source>
        <dbReference type="PDB" id="9JUN"/>
    </source>
</evidence>
<evidence type="ECO:0007744" key="39">
    <source>
        <dbReference type="PDB" id="9JUO"/>
    </source>
</evidence>
<evidence type="ECO:0007744" key="40">
    <source>
        <dbReference type="PDB" id="9JUP"/>
    </source>
</evidence>
<protein>
    <recommendedName>
        <fullName evidence="24">ABC transporter B family member 1</fullName>
        <shortName evidence="24">ABC transporter ABCB.1</shortName>
        <shortName evidence="24">AtABCB1</shortName>
    </recommendedName>
    <alternativeName>
        <fullName evidence="26">Auxin exporter ABCB1</fullName>
    </alternativeName>
    <alternativeName>
        <fullName evidence="27">Brassinosteroid exporter ABCB1</fullName>
    </alternativeName>
    <alternativeName>
        <fullName evidence="21 22">Multidrug resistance protein 1</fullName>
        <shortName evidence="21">AtMDR1</shortName>
    </alternativeName>
    <alternativeName>
        <fullName evidence="21 23">P-glycoprotein 1</fullName>
        <shortName evidence="21 23">AtPgp1</shortName>
    </alternativeName>
</protein>
<reference key="1">
    <citation type="journal article" date="1992" name="J. Biol. Chem.">
        <title>Structure of an mdr-like gene from Arabidopsis thaliana: evolutionary implications.</title>
        <authorList>
            <person name="Dudler R."/>
            <person name="Hertig C."/>
        </authorList>
    </citation>
    <scope>NUCLEOTIDE SEQUENCE [GENOMIC DNA]</scope>
    <scope>TISSUE SPECIFICITY</scope>
    <source>
        <strain>cv. Columbia</strain>
    </source>
</reference>
<reference key="2">
    <citation type="journal article" date="1999" name="Nature">
        <title>Sequence and analysis of chromosome 2 of the plant Arabidopsis thaliana.</title>
        <authorList>
            <person name="Lin X."/>
            <person name="Kaul S."/>
            <person name="Rounsley S.D."/>
            <person name="Shea T.P."/>
            <person name="Benito M.-I."/>
            <person name="Town C.D."/>
            <person name="Fujii C.Y."/>
            <person name="Mason T.M."/>
            <person name="Bowman C.L."/>
            <person name="Barnstead M.E."/>
            <person name="Feldblyum T.V."/>
            <person name="Buell C.R."/>
            <person name="Ketchum K.A."/>
            <person name="Lee J.J."/>
            <person name="Ronning C.M."/>
            <person name="Koo H.L."/>
            <person name="Moffat K.S."/>
            <person name="Cronin L.A."/>
            <person name="Shen M."/>
            <person name="Pai G."/>
            <person name="Van Aken S."/>
            <person name="Umayam L."/>
            <person name="Tallon L.J."/>
            <person name="Gill J.E."/>
            <person name="Adams M.D."/>
            <person name="Carrera A.J."/>
            <person name="Creasy T.H."/>
            <person name="Goodman H.M."/>
            <person name="Somerville C.R."/>
            <person name="Copenhaver G.P."/>
            <person name="Preuss D."/>
            <person name="Nierman W.C."/>
            <person name="White O."/>
            <person name="Eisen J.A."/>
            <person name="Salzberg S.L."/>
            <person name="Fraser C.M."/>
            <person name="Venter J.C."/>
        </authorList>
    </citation>
    <scope>NUCLEOTIDE SEQUENCE [LARGE SCALE GENOMIC DNA]</scope>
    <source>
        <strain>cv. Columbia</strain>
    </source>
</reference>
<reference key="3">
    <citation type="journal article" date="2017" name="Plant J.">
        <title>Araport11: a complete reannotation of the Arabidopsis thaliana reference genome.</title>
        <authorList>
            <person name="Cheng C.Y."/>
            <person name="Krishnakumar V."/>
            <person name="Chan A.P."/>
            <person name="Thibaud-Nissen F."/>
            <person name="Schobel S."/>
            <person name="Town C.D."/>
        </authorList>
    </citation>
    <scope>GENOME REANNOTATION</scope>
    <source>
        <strain>cv. Columbia</strain>
    </source>
</reference>
<reference key="4">
    <citation type="journal article" date="2003" name="Science">
        <title>Empirical analysis of transcriptional activity in the Arabidopsis genome.</title>
        <authorList>
            <person name="Yamada K."/>
            <person name="Lim J."/>
            <person name="Dale J.M."/>
            <person name="Chen H."/>
            <person name="Shinn P."/>
            <person name="Palm C.J."/>
            <person name="Southwick A.M."/>
            <person name="Wu H.C."/>
            <person name="Kim C.J."/>
            <person name="Nguyen M."/>
            <person name="Pham P.K."/>
            <person name="Cheuk R.F."/>
            <person name="Karlin-Newmann G."/>
            <person name="Liu S.X."/>
            <person name="Lam B."/>
            <person name="Sakano H."/>
            <person name="Wu T."/>
            <person name="Yu G."/>
            <person name="Miranda M."/>
            <person name="Quach H.L."/>
            <person name="Tripp M."/>
            <person name="Chang C.H."/>
            <person name="Lee J.M."/>
            <person name="Toriumi M.J."/>
            <person name="Chan M.M."/>
            <person name="Tang C.C."/>
            <person name="Onodera C.S."/>
            <person name="Deng J.M."/>
            <person name="Akiyama K."/>
            <person name="Ansari Y."/>
            <person name="Arakawa T."/>
            <person name="Banh J."/>
            <person name="Banno F."/>
            <person name="Bowser L."/>
            <person name="Brooks S.Y."/>
            <person name="Carninci P."/>
            <person name="Chao Q."/>
            <person name="Choy N."/>
            <person name="Enju A."/>
            <person name="Goldsmith A.D."/>
            <person name="Gurjal M."/>
            <person name="Hansen N.F."/>
            <person name="Hayashizaki Y."/>
            <person name="Johnson-Hopson C."/>
            <person name="Hsuan V.W."/>
            <person name="Iida K."/>
            <person name="Karnes M."/>
            <person name="Khan S."/>
            <person name="Koesema E."/>
            <person name="Ishida J."/>
            <person name="Jiang P.X."/>
            <person name="Jones T."/>
            <person name="Kawai J."/>
            <person name="Kamiya A."/>
            <person name="Meyers C."/>
            <person name="Nakajima M."/>
            <person name="Narusaka M."/>
            <person name="Seki M."/>
            <person name="Sakurai T."/>
            <person name="Satou M."/>
            <person name="Tamse R."/>
            <person name="Vaysberg M."/>
            <person name="Wallender E.K."/>
            <person name="Wong C."/>
            <person name="Yamamura Y."/>
            <person name="Yuan S."/>
            <person name="Shinozaki K."/>
            <person name="Davis R.W."/>
            <person name="Theologis A."/>
            <person name="Ecker J.R."/>
        </authorList>
    </citation>
    <scope>NUCLEOTIDE SEQUENCE [LARGE SCALE MRNA]</scope>
    <source>
        <strain>cv. Columbia</strain>
    </source>
</reference>
<reference key="5">
    <citation type="journal article" date="2001" name="Plant Cell">
        <title>Multidrug resistance-like genes of Arabidopsis required for auxin transport and auxin-mediated development.</title>
        <authorList>
            <person name="Noh B."/>
            <person name="Murphy A.S."/>
            <person name="Spalding E.P."/>
        </authorList>
    </citation>
    <scope>PROTEIN SEQUENCE OF 238-249</scope>
    <scope>FUNCTION</scope>
    <scope>INTERACTION WITH NPA</scope>
</reference>
<reference key="6">
    <citation type="journal article" date="1998" name="Plant Cell">
        <title>Involvement of an ABC transporter in a developmental pathway regulating hypocotyl cell elongation in the light.</title>
        <authorList>
            <person name="Sidler M."/>
            <person name="Hassa P."/>
            <person name="Hasan S."/>
            <person name="Ringli C."/>
            <person name="Dudler R."/>
        </authorList>
    </citation>
    <scope>FUNCTION</scope>
    <scope>TISSUE SPECIFICITY</scope>
    <scope>SUBCELLULAR LOCATION</scope>
</reference>
<reference key="7">
    <citation type="journal article" date="2000" name="Plant Cell">
        <title>A role for ectophosphatase in xenobiotic resistance.</title>
        <authorList>
            <person name="Thomas C."/>
            <person name="Rajagopal A."/>
            <person name="Windsor B."/>
            <person name="Dudler R."/>
            <person name="Lloyd A."/>
            <person name="Roux S.J."/>
        </authorList>
    </citation>
    <scope>FUNCTION</scope>
</reference>
<reference key="8">
    <citation type="journal article" date="2001" name="J. Biol. Chem.">
        <title>The Arabidopsis thaliana ABC protein superfamily, a complete inventory.</title>
        <authorList>
            <person name="Sanchez-Fernandez R."/>
            <person name="Davies T.G."/>
            <person name="Coleman J.O."/>
            <person name="Rea P.A."/>
        </authorList>
    </citation>
    <scope>GENE FAMILY</scope>
    <scope>NOMENCLATURE</scope>
</reference>
<reference key="9">
    <citation type="journal article" date="2003" name="Mol. Biol. Cell">
        <title>TWISTED DWARF1, a unique plasma membrane-anchored immunophilin-like protein, interacts with Arabidopsis multidrug resistance-like transporters AtPGP1 and AtPGP19.</title>
        <authorList>
            <person name="Geisler M."/>
            <person name="Kolukisaoglu H.U."/>
            <person name="Bouchard R."/>
            <person name="Billion K."/>
            <person name="Berger J."/>
            <person name="Saal B."/>
            <person name="Frangne N."/>
            <person name="Koncz-Kalman Z."/>
            <person name="Koncz C."/>
            <person name="Dudler R."/>
            <person name="Blakeslee J.J."/>
            <person name="Murphy A.S."/>
            <person name="Martinoia E."/>
            <person name="Schulz B."/>
        </authorList>
    </citation>
    <scope>FUNCTION</scope>
    <scope>SUBCELLULAR LOCATION</scope>
    <scope>INTERACTION WITH FKBP42</scope>
</reference>
<reference key="10">
    <citation type="journal article" date="2003" name="Nat. Biotechnol.">
        <title>Multiherbicide tolerance conferred by AtPgp1 and apyrase overexpression in Arabidopsis thaliana.</title>
        <authorList>
            <person name="Windsor B."/>
            <person name="Roux S.J."/>
            <person name="Lloyd A."/>
        </authorList>
    </citation>
    <scope>FUNCTION</scope>
</reference>
<reference key="11">
    <citation type="journal article" date="2004" name="Plant Cell">
        <title>Phosphoproteomics of the Arabidopsis plasma membrane and a new phosphorylation site database.</title>
        <authorList>
            <person name="Nuehse T.S."/>
            <person name="Stensballe A."/>
            <person name="Jensen O.N."/>
            <person name="Peck S.C."/>
        </authorList>
    </citation>
    <scope>IDENTIFICATION BY MASS SPECTROMETRY [LARGE SCALE ANALYSIS]</scope>
</reference>
<reference key="12">
    <citation type="journal article" date="2005" name="Plant Physiol.">
        <title>Two homologous ATP-binding cassette transporter proteins, AtMDR1 and AtPGP1, regulate Arabidopsis photomorphogenesis and root development by mediating polar auxin transport.</title>
        <authorList>
            <person name="Lin R."/>
            <person name="Wang H."/>
        </authorList>
    </citation>
    <scope>FUNCTION</scope>
</reference>
<reference key="13">
    <citation type="journal article" date="2005" name="Plant J.">
        <title>Cellular efflux of auxin catalyzed by the Arabidopsis MDR/PGP transporter AtPGP1.</title>
        <authorList>
            <person name="Geisler M."/>
            <person name="Blakeslee J.J."/>
            <person name="Bouchard R."/>
            <person name="Lee O.R."/>
            <person name="Vincenzetti V."/>
            <person name="Bandyopadhyay A."/>
            <person name="Titapiwatanakun B."/>
            <person name="Peer W.A."/>
            <person name="Bailly A."/>
            <person name="Richards E.L."/>
            <person name="Ejendal K.F.K."/>
            <person name="Smith A.P."/>
            <person name="Baroux C."/>
            <person name="Grossniklaus U."/>
            <person name="Mueller A."/>
            <person name="Hrycyna C.A."/>
            <person name="Dudler R."/>
            <person name="Murphy A.S."/>
            <person name="Martinoia E."/>
        </authorList>
    </citation>
    <scope>FUNCTION</scope>
    <scope>SUBCELLULAR LOCATION</scope>
    <scope>INDUCTION</scope>
    <scope>TISSUE SPECIFICITY</scope>
</reference>
<reference key="14">
    <citation type="journal article" date="2008" name="Trends Plant Sci.">
        <title>Plant ABC proteins - a unified nomenclature and updated inventory.</title>
        <authorList>
            <person name="Verrier P.J."/>
            <person name="Bird D."/>
            <person name="Burla B."/>
            <person name="Dassa E."/>
            <person name="Forestier C."/>
            <person name="Geisler M."/>
            <person name="Klein M."/>
            <person name="Kolukisaoglu H.U."/>
            <person name="Lee Y."/>
            <person name="Martinoia E."/>
            <person name="Murphy A."/>
            <person name="Rea P.A."/>
            <person name="Samuels L."/>
            <person name="Schulz B."/>
            <person name="Spalding E.J."/>
            <person name="Yazaki K."/>
            <person name="Theodoulou F.L."/>
        </authorList>
    </citation>
    <scope>GENE FAMILY</scope>
    <scope>NOMENCLATURE</scope>
</reference>
<reference key="15">
    <citation type="journal article" date="2009" name="Plant Physiol.">
        <title>Large-scale Arabidopsis phosphoproteome profiling reveals novel chloroplast kinase substrates and phosphorylation networks.</title>
        <authorList>
            <person name="Reiland S."/>
            <person name="Messerli G."/>
            <person name="Baerenfaller K."/>
            <person name="Gerrits B."/>
            <person name="Endler A."/>
            <person name="Grossmann J."/>
            <person name="Gruissem W."/>
            <person name="Baginsky S."/>
        </authorList>
    </citation>
    <scope>IDENTIFICATION BY MASS SPECTROMETRY [LARGE SCALE ANALYSIS]</scope>
</reference>
<reference key="16">
    <citation type="journal article" date="2020" name="Plant Physiol.">
        <title>An ATP-binding cassette transporter, ABCB19, regulates leaf position and morphology during phototropin1-mediated blue light responses.</title>
        <authorList>
            <person name="Jenness M.K."/>
            <person name="Tayengwa R."/>
            <person name="Murphy A.S."/>
        </authorList>
    </citation>
    <scope>FUNCTION</scope>
    <scope>DISRUPTION PHENOTYPE</scope>
    <scope>TRANSPORTER ACTIVITY</scope>
    <source>
        <strain>cv. Columbia</strain>
        <strain>cv. Columbia GL1</strain>
    </source>
</reference>
<reference key="17">
    <citation type="journal article" date="2022" name="Front. Plant Sci.">
        <title>Loss of multiple ABCB auxin transporters recapitulates the major twisted dwarf 1 phenotypes in Arabidopsis thaliana.</title>
        <authorList>
            <person name="Jenness M.K."/>
            <person name="Tayengwa R."/>
            <person name="Bate G.A."/>
            <person name="Tapken W."/>
            <person name="Zhang Y."/>
            <person name="Pang C."/>
            <person name="Murphy A.S."/>
        </authorList>
    </citation>
    <scope>FUNCTION</scope>
    <scope>DISRUPTION PHENOTYPE</scope>
    <scope>TISSUE SPECIFICITY</scope>
    <source>
        <strain>cv. Columbia</strain>
    </source>
</reference>
<reference key="18">
    <citation type="journal article" date="2022" name="J. Exp. Bot.">
        <title>Arabidopsis TWISTED DWARF1 regulates stamen elongation by differential activation of ABCB1,19-mediated auxin transport.</title>
        <authorList>
            <person name="Liu J."/>
            <person name="Ghelli R."/>
            <person name="Cardarelli M."/>
            <person name="Geisler M."/>
        </authorList>
    </citation>
    <scope>FUNCTION</scope>
    <scope>DISRUPTION PHENOTYPE</scope>
    <scope>ACTIVITY REGULATION</scope>
    <scope>DEVELOPMENTAL STAGE</scope>
    <scope>SUBCELLULAR LOCATION</scope>
    <source>
        <strain>cv. Columbia</strain>
    </source>
</reference>
<reference key="19">
    <citation type="journal article" date="2024" name="Science">
        <title>Structure and function of the Arabidopsis ABC transporter ABCB19 in brassinosteroid export.</title>
        <authorList>
            <person name="Ying W."/>
            <person name="Wang Y."/>
            <person name="Wei H."/>
            <person name="Luo Y."/>
            <person name="Ma Q."/>
            <person name="Zhu H."/>
            <person name="Janssens H."/>
            <person name="Vukasinovic N."/>
            <person name="Kvasnica M."/>
            <person name="Winne J.M."/>
            <person name="Gao Y."/>
            <person name="Tan S."/>
            <person name="Friml J."/>
            <person name="Liu X."/>
            <person name="Russinova E."/>
            <person name="Sun L."/>
        </authorList>
    </citation>
    <scope>FUNCTION</scope>
    <scope>DISRUPTION PHENOTYPE</scope>
    <scope>INDUCTION BY BRASSINOSTEROIDS</scope>
    <source>
        <strain>cv. Columbia</strain>
    </source>
</reference>
<reference evidence="34 35 36 37 38 39 40" key="20">
    <citation type="submission" date="2024-10" db="PDB data bank">
        <title>Structure of Arabidopsis thaliana ABCB1 with AMP-PNP bound in the inward-facing conformation under IAA condition.</title>
        <authorList>
            <person name="Chen Q."/>
        </authorList>
    </citation>
    <scope>STRUCTURE BY ELECTRON MICROSCOPY (3.10 ANGSTROMS) OF APOENZYME AND COMPLEXES WITH AMP-PNP AND BRASSINOLIDE</scope>
</reference>
<reference evidence="31 32 33" key="21">
    <citation type="journal article" date="2025" name="Plant Commun.">
        <title>Structural insights into brassinosteroid export mediated by the Arabidopsis ABC transporter ABCB1.</title>
        <authorList>
            <person name="Wei H."/>
            <person name="Zhu H."/>
            <person name="Ying W."/>
            <person name="Janssens H."/>
            <person name="Kvasnica M."/>
            <person name="Winne J.M."/>
            <person name="Gao Y."/>
            <person name="Friml J."/>
            <person name="Ma Q."/>
            <person name="Tan S."/>
            <person name="Liu X."/>
            <person name="Russinova E."/>
            <person name="Sun L."/>
        </authorList>
    </citation>
    <scope>STRUCTURE BY ELECTRON MICROSCOPY (3.50 ANGSTROMS) OF APOENZYME AND COMPLEXES WITH ATP AND BRASSINOLIDE</scope>
    <scope>FUNCTION</scope>
    <scope>MUTAGENESIS OF PHE-61; PHE-65; TYR-279; VAL-282; TYR-286; PHE-312; MET-315; LEU-319; GLU-532; PHE-717; LEU-721; TYR-941; PHE-966; MET-970; GLU-978; PRO-984 AND GLU-1188</scope>
    <scope>DISRUPTION PHENOTYPE</scope>
    <scope>TRANSPORTER ACTIVITY</scope>
    <scope>ACTIVITY REGULATION</scope>
    <scope>BIOPHYSICOCHEMICAL PROPERTIES</scope>
    <source>
        <strain>cv. Columbia</strain>
    </source>
</reference>
<proteinExistence type="evidence at protein level"/>
<feature type="chain" id="PRO_0000227912" description="ABC transporter B family member 1">
    <location>
        <begin position="1"/>
        <end position="1286"/>
    </location>
</feature>
<feature type="transmembrane region" description="Helical" evidence="3">
    <location>
        <begin position="42"/>
        <end position="62"/>
    </location>
</feature>
<feature type="transmembrane region" description="Helical" evidence="3">
    <location>
        <begin position="93"/>
        <end position="113"/>
    </location>
</feature>
<feature type="transmembrane region" description="Helical" evidence="3">
    <location>
        <begin position="166"/>
        <end position="186"/>
    </location>
</feature>
<feature type="transmembrane region" description="Helical" evidence="3">
    <location>
        <begin position="187"/>
        <end position="207"/>
    </location>
</feature>
<feature type="transmembrane region" description="Helical" evidence="3">
    <location>
        <begin position="277"/>
        <end position="297"/>
    </location>
</feature>
<feature type="transmembrane region" description="Helical" evidence="3">
    <location>
        <begin position="301"/>
        <end position="321"/>
    </location>
</feature>
<feature type="transmembrane region" description="Helical" evidence="3">
    <location>
        <begin position="705"/>
        <end position="725"/>
    </location>
</feature>
<feature type="transmembrane region" description="Helical" evidence="3">
    <location>
        <begin position="745"/>
        <end position="765"/>
    </location>
</feature>
<feature type="transmembrane region" description="Helical" evidence="3">
    <location>
        <begin position="821"/>
        <end position="843"/>
    </location>
</feature>
<feature type="transmembrane region" description="Helical" evidence="3">
    <location>
        <begin position="845"/>
        <end position="867"/>
    </location>
</feature>
<feature type="transmembrane region" description="Helical" evidence="3">
    <location>
        <begin position="932"/>
        <end position="952"/>
    </location>
</feature>
<feature type="transmembrane region" description="Helical" evidence="3">
    <location>
        <begin position="967"/>
        <end position="987"/>
    </location>
</feature>
<feature type="domain" description="ABC transmembrane type-1 1" evidence="3">
    <location>
        <begin position="44"/>
        <end position="333"/>
    </location>
</feature>
<feature type="domain" description="ABC transporter 1" evidence="2">
    <location>
        <begin position="368"/>
        <end position="604"/>
    </location>
</feature>
<feature type="domain" description="ABC transmembrane type-1 2" evidence="3">
    <location>
        <begin position="700"/>
        <end position="988"/>
    </location>
</feature>
<feature type="domain" description="ABC transporter 2" evidence="2">
    <location>
        <begin position="1024"/>
        <end position="1260"/>
    </location>
</feature>
<feature type="region of interest" description="Disordered" evidence="6">
    <location>
        <begin position="614"/>
        <end position="647"/>
    </location>
</feature>
<feature type="region of interest" description="Interaction with FKBP42/TWD1" evidence="11">
    <location>
        <begin position="1049"/>
        <end position="1286"/>
    </location>
</feature>
<feature type="compositionally biased region" description="Low complexity" evidence="6">
    <location>
        <begin position="616"/>
        <end position="635"/>
    </location>
</feature>
<feature type="binding site" evidence="28 35">
    <location>
        <position position="139"/>
    </location>
    <ligand>
        <name>ATP</name>
        <dbReference type="ChEBI" id="CHEBI:30616"/>
        <label>1</label>
    </ligand>
</feature>
<feature type="binding site" evidence="18 20 32 33 36 37">
    <location>
        <position position="286"/>
    </location>
    <ligand>
        <name>brassinolide</name>
        <dbReference type="ChEBI" id="CHEBI:28277"/>
    </ligand>
</feature>
<feature type="binding site" evidence="18 28 33 35">
    <location>
        <position position="377"/>
    </location>
    <ligand>
        <name>ATP</name>
        <dbReference type="ChEBI" id="CHEBI:30616"/>
        <label>1</label>
    </ligand>
</feature>
<feature type="binding site" evidence="28 35">
    <location>
        <position position="379"/>
    </location>
    <ligand>
        <name>ATP</name>
        <dbReference type="ChEBI" id="CHEBI:30616"/>
        <label>1</label>
    </ligand>
</feature>
<feature type="binding site" evidence="28 35">
    <location>
        <position position="380"/>
    </location>
    <ligand>
        <name>ATP</name>
        <dbReference type="ChEBI" id="CHEBI:30616"/>
        <label>1</label>
    </ligand>
</feature>
<feature type="binding site" evidence="18 33">
    <location>
        <position position="408"/>
    </location>
    <ligand>
        <name>ATP</name>
        <dbReference type="ChEBI" id="CHEBI:30616"/>
        <label>1</label>
    </ligand>
</feature>
<feature type="binding site" evidence="18 28 33 35">
    <location>
        <position position="409"/>
    </location>
    <ligand>
        <name>ATP</name>
        <dbReference type="ChEBI" id="CHEBI:30616"/>
        <label>1</label>
    </ligand>
</feature>
<feature type="binding site" evidence="18 28 33 35">
    <location>
        <position position="410"/>
    </location>
    <ligand>
        <name>ATP</name>
        <dbReference type="ChEBI" id="CHEBI:30616"/>
        <label>1</label>
    </ligand>
</feature>
<feature type="binding site" evidence="28 35">
    <location>
        <position position="411"/>
    </location>
    <ligand>
        <name>ATP</name>
        <dbReference type="ChEBI" id="CHEBI:30616"/>
        <label>1</label>
    </ligand>
</feature>
<feature type="binding site" evidence="18 28 33 35">
    <location>
        <position position="793"/>
    </location>
    <ligand>
        <name>ATP</name>
        <dbReference type="ChEBI" id="CHEBI:30616"/>
        <label>2</label>
    </ligand>
</feature>
<feature type="binding site" evidence="18 20 32 36 37">
    <location>
        <position position="941"/>
    </location>
    <ligand>
        <name>brassinolide</name>
        <dbReference type="ChEBI" id="CHEBI:28277"/>
    </ligand>
</feature>
<feature type="binding site" evidence="20 36">
    <location>
        <position position="978"/>
    </location>
    <ligand>
        <name>brassinolide</name>
        <dbReference type="ChEBI" id="CHEBI:28277"/>
    </ligand>
</feature>
<feature type="binding site" evidence="18 28 33 35">
    <location>
        <position position="1033"/>
    </location>
    <ligand>
        <name>ATP</name>
        <dbReference type="ChEBI" id="CHEBI:30616"/>
        <label>2</label>
    </ligand>
</feature>
<feature type="binding site" evidence="28 35">
    <location>
        <position position="1036"/>
    </location>
    <ligand>
        <name>ATP</name>
        <dbReference type="ChEBI" id="CHEBI:30616"/>
        <label>2</label>
    </ligand>
</feature>
<feature type="binding site" evidence="28 35">
    <location>
        <position position="1064"/>
    </location>
    <ligand>
        <name>ATP</name>
        <dbReference type="ChEBI" id="CHEBI:30616"/>
        <label>2</label>
    </ligand>
</feature>
<feature type="binding site" evidence="18 28 33 35">
    <location>
        <position position="1065"/>
    </location>
    <ligand>
        <name>ATP</name>
        <dbReference type="ChEBI" id="CHEBI:30616"/>
        <label>2</label>
    </ligand>
</feature>
<feature type="binding site" evidence="28 35">
    <location>
        <position position="1066"/>
    </location>
    <ligand>
        <name>ATP</name>
        <dbReference type="ChEBI" id="CHEBI:30616"/>
        <label>2</label>
    </ligand>
</feature>
<feature type="glycosylation site" description="N-linked (GlcNAc...) asparagine" evidence="4">
    <location>
        <position position="217"/>
    </location>
</feature>
<feature type="glycosylation site" description="N-linked (GlcNAc...) asparagine" evidence="4">
    <location>
        <position position="640"/>
    </location>
</feature>
<feature type="glycosylation site" description="N-linked (GlcNAc...) asparagine" evidence="4">
    <location>
        <position position="771"/>
    </location>
</feature>
<feature type="glycosylation site" description="N-linked (GlcNAc...) asparagine" evidence="4">
    <location>
        <position position="797"/>
    </location>
</feature>
<feature type="mutagenesis site" description="Reduced brassinolide-triggered ATPase activity and altered brassinosteroid exporter activity." evidence="18">
    <original>F</original>
    <variation>A</variation>
    <location>
        <position position="61"/>
    </location>
</feature>
<feature type="mutagenesis site" description="Reduced brassinolide-triggered ATPase activity and altered brassinosteroid exporter activity." evidence="18">
    <original>F</original>
    <variation>A</variation>
    <location>
        <position position="65"/>
    </location>
</feature>
<feature type="mutagenesis site" description="Slightly increased brassinolide-triggered ATPase activity but normal brassinosteroid exporter activity." evidence="18">
    <original>Y</original>
    <variation>A</variation>
    <location>
        <position position="279"/>
    </location>
</feature>
<feature type="mutagenesis site" description="Reduced brassinolide-triggered ATPase activity." evidence="18">
    <original>V</original>
    <variation>A</variation>
    <location>
        <position position="282"/>
    </location>
</feature>
<feature type="mutagenesis site" description="Reduced brassinolide-triggered ATPase activity and altered brassinosteroid exporter activity. Strongly altered brassinosteroid exporter activity; when associated with A-941." evidence="18">
    <original>Y</original>
    <variation>A</variation>
    <location>
        <position position="286"/>
    </location>
</feature>
<feature type="mutagenesis site" description="Reduced brassinolide-triggered ATPase activity and altered brassinosteroid exporter activity." evidence="18">
    <original>F</original>
    <variation>A</variation>
    <location>
        <position position="312"/>
    </location>
</feature>
<feature type="mutagenesis site" description="Reduced brassinolide-triggered ATPase activity." evidence="18">
    <original>M</original>
    <variation>A</variation>
    <location>
        <position position="315"/>
    </location>
</feature>
<feature type="mutagenesis site" description="Reduced brassinolide-triggered ATPase activity." evidence="18">
    <original>L</original>
    <variation>A</variation>
    <location>
        <position position="319"/>
    </location>
</feature>
<feature type="mutagenesis site" description="In ABCB1(EQ); loss of ATPase activity associated with altered brassinosteroid export capacity; when associated with Q-532." evidence="18">
    <original>E</original>
    <variation>Q</variation>
    <location>
        <position position="532"/>
    </location>
</feature>
<feature type="mutagenesis site" description="Reduced brassinolide-triggered ATPase activity and altered brassinosteroid exporter activity." evidence="18">
    <original>F</original>
    <variation>A</variation>
    <location>
        <position position="717"/>
    </location>
</feature>
<feature type="mutagenesis site" description="Normal brassinolide-triggered ATPase activity." evidence="18">
    <original>L</original>
    <variation>A</variation>
    <location>
        <position position="721"/>
    </location>
</feature>
<feature type="mutagenesis site" description="Reduced brassinolide-triggered ATPase activity and altered brassinosteroid exporter activity. Strongly altered brassinosteroid exporter activity; when associated with A-286." evidence="18">
    <original>Y</original>
    <variation>A</variation>
    <location>
        <position position="941"/>
    </location>
</feature>
<feature type="mutagenesis site" description="Reduced brassinolide-triggered ATPase activity and altered brassinosteroid exporter activity." evidence="18">
    <original>F</original>
    <variation>A</variation>
    <location>
        <position position="966"/>
    </location>
</feature>
<feature type="mutagenesis site" description="Slightly increased brassinolide-triggered ATPase activity." evidence="18">
    <original>M</original>
    <variation>A</variation>
    <location>
        <position position="970"/>
    </location>
</feature>
<feature type="mutagenesis site" description="Normal brassinolide-triggered ATPase activity." evidence="18">
    <original>E</original>
    <variation>A</variation>
    <location>
        <position position="978"/>
    </location>
</feature>
<feature type="mutagenesis site" description="Slight increase in brassinolide-triggered ATPase activity and modest elevation in brassinosteroid exporter activity." evidence="18">
    <original>P</original>
    <variation>A</variation>
    <location>
        <position position="984"/>
    </location>
</feature>
<feature type="mutagenesis site" description="In ABCB1(EQ); loss of ATPase activity associated with altered brassinosteroid export capacity; when associated with Q-1188." evidence="18">
    <original>E</original>
    <variation>Q</variation>
    <location>
        <position position="1188"/>
    </location>
</feature>
<feature type="sequence conflict" description="In Ref. 4; AAM98246." evidence="25" ref="4">
    <original>G</original>
    <variation>D</variation>
    <location>
        <position position="293"/>
    </location>
</feature>
<feature type="sequence conflict" description="In Ref. 4; AAM98246." evidence="25" ref="4">
    <original>E</original>
    <variation>G</variation>
    <location>
        <position position="1188"/>
    </location>
</feature>
<keyword id="KW-0002">3D-structure</keyword>
<keyword id="KW-0067">ATP-binding</keyword>
<keyword id="KW-0927">Auxin signaling pathway</keyword>
<keyword id="KW-1070">Brassinosteroid signaling pathway</keyword>
<keyword id="KW-1003">Cell membrane</keyword>
<keyword id="KW-0903">Direct protein sequencing</keyword>
<keyword id="KW-0325">Glycoprotein</keyword>
<keyword id="KW-0472">Membrane</keyword>
<keyword id="KW-0547">Nucleotide-binding</keyword>
<keyword id="KW-1185">Reference proteome</keyword>
<keyword id="KW-0677">Repeat</keyword>
<keyword id="KW-0812">Transmembrane</keyword>
<keyword id="KW-1133">Transmembrane helix</keyword>
<keyword id="KW-0813">Transport</keyword>
<organism>
    <name type="scientific">Arabidopsis thaliana</name>
    <name type="common">Mouse-ear cress</name>
    <dbReference type="NCBI Taxonomy" id="3702"/>
    <lineage>
        <taxon>Eukaryota</taxon>
        <taxon>Viridiplantae</taxon>
        <taxon>Streptophyta</taxon>
        <taxon>Embryophyta</taxon>
        <taxon>Tracheophyta</taxon>
        <taxon>Spermatophyta</taxon>
        <taxon>Magnoliopsida</taxon>
        <taxon>eudicotyledons</taxon>
        <taxon>Gunneridae</taxon>
        <taxon>Pentapetalae</taxon>
        <taxon>rosids</taxon>
        <taxon>malvids</taxon>
        <taxon>Brassicales</taxon>
        <taxon>Brassicaceae</taxon>
        <taxon>Camelineae</taxon>
        <taxon>Arabidopsis</taxon>
    </lineage>
</organism>
<gene>
    <name evidence="24" type="primary">ABCB1</name>
    <name evidence="21 22" type="synonym">MDR1</name>
    <name evidence="21 23" type="synonym">PGP1</name>
    <name evidence="29" type="ordered locus">At2g36910</name>
    <name evidence="30" type="ORF">T1J8.9</name>
</gene>